<gene>
    <name evidence="1" type="primary">tatA</name>
    <name type="ordered locus">HPSH_01655</name>
</gene>
<accession>B2USE9</accession>
<keyword id="KW-0997">Cell inner membrane</keyword>
<keyword id="KW-1003">Cell membrane</keyword>
<keyword id="KW-0472">Membrane</keyword>
<keyword id="KW-0653">Protein transport</keyword>
<keyword id="KW-0811">Translocation</keyword>
<keyword id="KW-0812">Transmembrane</keyword>
<keyword id="KW-1133">Transmembrane helix</keyword>
<keyword id="KW-0813">Transport</keyword>
<proteinExistence type="inferred from homology"/>
<evidence type="ECO:0000255" key="1">
    <source>
        <dbReference type="HAMAP-Rule" id="MF_00236"/>
    </source>
</evidence>
<evidence type="ECO:0000256" key="2">
    <source>
        <dbReference type="SAM" id="MobiDB-lite"/>
    </source>
</evidence>
<reference key="1">
    <citation type="submission" date="2008-05" db="EMBL/GenBank/DDBJ databases">
        <title>Genome sequence of Helicobacter pylori from the remote Amazon: traces of Asian ancestry of the first Americans.</title>
        <authorList>
            <person name="Kersulyte D."/>
            <person name="Kalia A."/>
            <person name="Gilman R.H."/>
            <person name="Berg D.E."/>
        </authorList>
    </citation>
    <scope>NUCLEOTIDE SEQUENCE [LARGE SCALE GENOMIC DNA]</scope>
    <source>
        <strain>Shi470</strain>
    </source>
</reference>
<feature type="chain" id="PRO_1000197874" description="Sec-independent protein translocase protein TatA">
    <location>
        <begin position="1"/>
        <end position="79"/>
    </location>
</feature>
<feature type="transmembrane region" description="Helical" evidence="1">
    <location>
        <begin position="1"/>
        <end position="21"/>
    </location>
</feature>
<feature type="region of interest" description="Disordered" evidence="2">
    <location>
        <begin position="48"/>
        <end position="79"/>
    </location>
</feature>
<feature type="compositionally biased region" description="Basic and acidic residues" evidence="2">
    <location>
        <begin position="66"/>
        <end position="79"/>
    </location>
</feature>
<sequence>MGGFTSIWHWVIVLLVIVLLFGAKKIPELAKGLGSGIKNFKKAVKDDEEEAKNEPKTLDAQVAQTKVHETSEIKSKQES</sequence>
<dbReference type="EMBL" id="CP001072">
    <property type="protein sequence ID" value="ACD47781.1"/>
    <property type="molecule type" value="Genomic_DNA"/>
</dbReference>
<dbReference type="RefSeq" id="WP_000508597.1">
    <property type="nucleotide sequence ID" value="NC_010698.2"/>
</dbReference>
<dbReference type="SMR" id="B2USE9"/>
<dbReference type="KEGG" id="hps:HPSH_01655"/>
<dbReference type="HOGENOM" id="CLU_086034_5_4_7"/>
<dbReference type="GO" id="GO:0033281">
    <property type="term" value="C:TAT protein transport complex"/>
    <property type="evidence" value="ECO:0007669"/>
    <property type="project" value="UniProtKB-UniRule"/>
</dbReference>
<dbReference type="GO" id="GO:0008320">
    <property type="term" value="F:protein transmembrane transporter activity"/>
    <property type="evidence" value="ECO:0007669"/>
    <property type="project" value="UniProtKB-UniRule"/>
</dbReference>
<dbReference type="GO" id="GO:0043953">
    <property type="term" value="P:protein transport by the Tat complex"/>
    <property type="evidence" value="ECO:0007669"/>
    <property type="project" value="UniProtKB-UniRule"/>
</dbReference>
<dbReference type="Gene3D" id="1.20.5.3310">
    <property type="match status" value="1"/>
</dbReference>
<dbReference type="HAMAP" id="MF_00236">
    <property type="entry name" value="TatA_E"/>
    <property type="match status" value="1"/>
</dbReference>
<dbReference type="InterPro" id="IPR003369">
    <property type="entry name" value="TatA/B/E"/>
</dbReference>
<dbReference type="InterPro" id="IPR006312">
    <property type="entry name" value="TatA/E"/>
</dbReference>
<dbReference type="NCBIfam" id="TIGR01411">
    <property type="entry name" value="tatAE"/>
    <property type="match status" value="1"/>
</dbReference>
<dbReference type="PANTHER" id="PTHR42982">
    <property type="entry name" value="SEC-INDEPENDENT PROTEIN TRANSLOCASE PROTEIN TATA"/>
    <property type="match status" value="1"/>
</dbReference>
<dbReference type="PANTHER" id="PTHR42982:SF1">
    <property type="entry name" value="SEC-INDEPENDENT PROTEIN TRANSLOCASE PROTEIN TATA"/>
    <property type="match status" value="1"/>
</dbReference>
<dbReference type="Pfam" id="PF02416">
    <property type="entry name" value="TatA_B_E"/>
    <property type="match status" value="1"/>
</dbReference>
<protein>
    <recommendedName>
        <fullName evidence="1">Sec-independent protein translocase protein TatA</fullName>
    </recommendedName>
</protein>
<comment type="function">
    <text evidence="1">Part of the twin-arginine translocation (Tat) system that transports large folded proteins containing a characteristic twin-arginine motif in their signal peptide across membranes. TatA could form the protein-conducting channel of the Tat system.</text>
</comment>
<comment type="subunit">
    <text evidence="1">The Tat system comprises two distinct complexes: a TatABC complex, containing multiple copies of TatA, TatB and TatC subunits, and a separate TatA complex, containing only TatA subunits. Substrates initially bind to the TatABC complex, which probably triggers association of the separate TatA complex to form the active translocon.</text>
</comment>
<comment type="subcellular location">
    <subcellularLocation>
        <location evidence="1">Cell inner membrane</location>
        <topology evidence="1">Single-pass membrane protein</topology>
    </subcellularLocation>
</comment>
<comment type="similarity">
    <text evidence="1">Belongs to the TatA/E family.</text>
</comment>
<name>TATA_HELPS</name>
<organism>
    <name type="scientific">Helicobacter pylori (strain Shi470)</name>
    <dbReference type="NCBI Taxonomy" id="512562"/>
    <lineage>
        <taxon>Bacteria</taxon>
        <taxon>Pseudomonadati</taxon>
        <taxon>Campylobacterota</taxon>
        <taxon>Epsilonproteobacteria</taxon>
        <taxon>Campylobacterales</taxon>
        <taxon>Helicobacteraceae</taxon>
        <taxon>Helicobacter</taxon>
    </lineage>
</organism>